<reference key="1">
    <citation type="journal article" date="2005" name="Nat. Biotechnol.">
        <title>Complete genome sequence of the acetic acid bacterium Gluconobacter oxydans.</title>
        <authorList>
            <person name="Prust C."/>
            <person name="Hoffmeister M."/>
            <person name="Liesegang H."/>
            <person name="Wiezer A."/>
            <person name="Fricke W.F."/>
            <person name="Ehrenreich A."/>
            <person name="Gottschalk G."/>
            <person name="Deppenmeier U."/>
        </authorList>
    </citation>
    <scope>NUCLEOTIDE SEQUENCE [LARGE SCALE GENOMIC DNA]</scope>
    <source>
        <strain>621H</strain>
    </source>
</reference>
<organism>
    <name type="scientific">Gluconobacter oxydans (strain 621H)</name>
    <name type="common">Gluconobacter suboxydans</name>
    <dbReference type="NCBI Taxonomy" id="290633"/>
    <lineage>
        <taxon>Bacteria</taxon>
        <taxon>Pseudomonadati</taxon>
        <taxon>Pseudomonadota</taxon>
        <taxon>Alphaproteobacteria</taxon>
        <taxon>Acetobacterales</taxon>
        <taxon>Acetobacteraceae</taxon>
        <taxon>Gluconobacter</taxon>
    </lineage>
</organism>
<evidence type="ECO:0000255" key="1">
    <source>
        <dbReference type="HAMAP-Rule" id="MF_00415"/>
    </source>
</evidence>
<proteinExistence type="inferred from homology"/>
<dbReference type="EMBL" id="CP000009">
    <property type="protein sequence ID" value="AAW61052.1"/>
    <property type="molecule type" value="Genomic_DNA"/>
</dbReference>
<dbReference type="RefSeq" id="WP_011252844.1">
    <property type="nucleotide sequence ID" value="NZ_LT900338.1"/>
</dbReference>
<dbReference type="STRING" id="290633.GOX1291"/>
<dbReference type="GeneID" id="56905602"/>
<dbReference type="KEGG" id="gox:GOX1291"/>
<dbReference type="eggNOG" id="COG2063">
    <property type="taxonomic scope" value="Bacteria"/>
</dbReference>
<dbReference type="HOGENOM" id="CLU_069313_1_2_5"/>
<dbReference type="Proteomes" id="UP000006375">
    <property type="component" value="Chromosome"/>
</dbReference>
<dbReference type="GO" id="GO:0009427">
    <property type="term" value="C:bacterial-type flagellum basal body, distal rod, L ring"/>
    <property type="evidence" value="ECO:0007669"/>
    <property type="project" value="InterPro"/>
</dbReference>
<dbReference type="GO" id="GO:0009279">
    <property type="term" value="C:cell outer membrane"/>
    <property type="evidence" value="ECO:0007669"/>
    <property type="project" value="UniProtKB-SubCell"/>
</dbReference>
<dbReference type="GO" id="GO:0003774">
    <property type="term" value="F:cytoskeletal motor activity"/>
    <property type="evidence" value="ECO:0007669"/>
    <property type="project" value="InterPro"/>
</dbReference>
<dbReference type="GO" id="GO:0071973">
    <property type="term" value="P:bacterial-type flagellum-dependent cell motility"/>
    <property type="evidence" value="ECO:0007669"/>
    <property type="project" value="InterPro"/>
</dbReference>
<dbReference type="HAMAP" id="MF_00415">
    <property type="entry name" value="FlgH"/>
    <property type="match status" value="1"/>
</dbReference>
<dbReference type="InterPro" id="IPR000527">
    <property type="entry name" value="Flag_Lring"/>
</dbReference>
<dbReference type="NCBIfam" id="NF001305">
    <property type="entry name" value="PRK00249.1-5"/>
    <property type="match status" value="1"/>
</dbReference>
<dbReference type="PANTHER" id="PTHR34933">
    <property type="entry name" value="FLAGELLAR L-RING PROTEIN"/>
    <property type="match status" value="1"/>
</dbReference>
<dbReference type="PANTHER" id="PTHR34933:SF1">
    <property type="entry name" value="FLAGELLAR L-RING PROTEIN"/>
    <property type="match status" value="1"/>
</dbReference>
<dbReference type="Pfam" id="PF02107">
    <property type="entry name" value="FlgH"/>
    <property type="match status" value="1"/>
</dbReference>
<dbReference type="PRINTS" id="PR01008">
    <property type="entry name" value="FLGLRINGFLGH"/>
</dbReference>
<dbReference type="PROSITE" id="PS51257">
    <property type="entry name" value="PROKAR_LIPOPROTEIN"/>
    <property type="match status" value="1"/>
</dbReference>
<keyword id="KW-0975">Bacterial flagellum</keyword>
<keyword id="KW-0998">Cell outer membrane</keyword>
<keyword id="KW-0449">Lipoprotein</keyword>
<keyword id="KW-0472">Membrane</keyword>
<keyword id="KW-0564">Palmitate</keyword>
<keyword id="KW-1185">Reference proteome</keyword>
<keyword id="KW-0732">Signal</keyword>
<name>FLGH_GLUOX</name>
<comment type="function">
    <text evidence="1">Assembles around the rod to form the L-ring and probably protects the motor/basal body from shearing forces during rotation.</text>
</comment>
<comment type="subunit">
    <text evidence="1">The basal body constitutes a major portion of the flagellar organelle and consists of four rings (L,P,S, and M) mounted on a central rod.</text>
</comment>
<comment type="subcellular location">
    <subcellularLocation>
        <location evidence="1">Cell outer membrane</location>
        <topology evidence="1">Lipid-anchor</topology>
    </subcellularLocation>
    <subcellularLocation>
        <location evidence="1">Bacterial flagellum basal body</location>
    </subcellularLocation>
</comment>
<comment type="similarity">
    <text evidence="1">Belongs to the FlgH family.</text>
</comment>
<sequence length="248" mass="26598">MRHAFRHSVRTLGLLGLLPVLSACNSLAQMSEIGRPPRMTSITDPTLANSYRPVTMPMPPLQAPPDEAASLWRSGSKAFFKDQRASQVGDLVTIIVDITDNAAFNNGTTADRTADEKFGIPNLFGIKGKVISAITGADSLSTASSSDSGATGKITRNETVTLRLAGTITQVLPNGNFVVMGKQEVRVNSELRELGVSGIVRPQDITADNTVTHDRMAEARISYGGRGTLTQLQTPRYGQQVMDAILPF</sequence>
<gene>
    <name evidence="1" type="primary">flgH</name>
    <name type="ordered locus">GOX1291</name>
</gene>
<accession>Q5FRE4</accession>
<feature type="signal peptide" evidence="1">
    <location>
        <begin position="1"/>
        <end position="23"/>
    </location>
</feature>
<feature type="chain" id="PRO_0000009448" description="Flagellar L-ring protein">
    <location>
        <begin position="24"/>
        <end position="248"/>
    </location>
</feature>
<feature type="lipid moiety-binding region" description="N-palmitoyl cysteine" evidence="1">
    <location>
        <position position="24"/>
    </location>
</feature>
<feature type="lipid moiety-binding region" description="S-diacylglycerol cysteine" evidence="1">
    <location>
        <position position="24"/>
    </location>
</feature>
<protein>
    <recommendedName>
        <fullName evidence="1">Flagellar L-ring protein</fullName>
    </recommendedName>
    <alternativeName>
        <fullName evidence="1">Basal body L-ring protein</fullName>
    </alternativeName>
</protein>